<sequence>MARVTVQDAVEKIGNRFDLVLVAARRARQMQVGGKDPLVPEENDKTTVIALREIEEGLINNQILDVRERQEQQEQEAAELQAVTAIAEGRR</sequence>
<evidence type="ECO:0000255" key="1">
    <source>
        <dbReference type="HAMAP-Rule" id="MF_00366"/>
    </source>
</evidence>
<name>RPOZ_ECO7I</name>
<keyword id="KW-0240">DNA-directed RNA polymerase</keyword>
<keyword id="KW-0548">Nucleotidyltransferase</keyword>
<keyword id="KW-0804">Transcription</keyword>
<keyword id="KW-0808">Transferase</keyword>
<accession>B7NQ13</accession>
<feature type="chain" id="PRO_1000121217" description="DNA-directed RNA polymerase subunit omega">
    <location>
        <begin position="1"/>
        <end position="91"/>
    </location>
</feature>
<dbReference type="EC" id="2.7.7.6" evidence="1"/>
<dbReference type="EMBL" id="CU928164">
    <property type="protein sequence ID" value="CAR20278.1"/>
    <property type="molecule type" value="Genomic_DNA"/>
</dbReference>
<dbReference type="RefSeq" id="WP_000135058.1">
    <property type="nucleotide sequence ID" value="NC_011750.1"/>
</dbReference>
<dbReference type="RefSeq" id="YP_002410047.1">
    <property type="nucleotide sequence ID" value="NC_011750.1"/>
</dbReference>
<dbReference type="SMR" id="B7NQ13"/>
<dbReference type="STRING" id="585057.ECIAI39_4171"/>
<dbReference type="GeneID" id="98390719"/>
<dbReference type="KEGG" id="ect:ECIAI39_4171"/>
<dbReference type="PATRIC" id="fig|585057.6.peg.4320"/>
<dbReference type="HOGENOM" id="CLU_125406_5_3_6"/>
<dbReference type="PRO" id="PR:B7NQ13"/>
<dbReference type="Proteomes" id="UP000000749">
    <property type="component" value="Chromosome"/>
</dbReference>
<dbReference type="GO" id="GO:0000428">
    <property type="term" value="C:DNA-directed RNA polymerase complex"/>
    <property type="evidence" value="ECO:0007669"/>
    <property type="project" value="UniProtKB-KW"/>
</dbReference>
<dbReference type="GO" id="GO:0003677">
    <property type="term" value="F:DNA binding"/>
    <property type="evidence" value="ECO:0007669"/>
    <property type="project" value="UniProtKB-UniRule"/>
</dbReference>
<dbReference type="GO" id="GO:0003899">
    <property type="term" value="F:DNA-directed RNA polymerase activity"/>
    <property type="evidence" value="ECO:0007669"/>
    <property type="project" value="UniProtKB-UniRule"/>
</dbReference>
<dbReference type="GO" id="GO:0006351">
    <property type="term" value="P:DNA-templated transcription"/>
    <property type="evidence" value="ECO:0007669"/>
    <property type="project" value="UniProtKB-UniRule"/>
</dbReference>
<dbReference type="FunFam" id="3.90.940.10:FF:000001">
    <property type="entry name" value="DNA-directed RNA polymerase subunit omega"/>
    <property type="match status" value="1"/>
</dbReference>
<dbReference type="Gene3D" id="3.90.940.10">
    <property type="match status" value="1"/>
</dbReference>
<dbReference type="HAMAP" id="MF_00366">
    <property type="entry name" value="RNApol_bact_RpoZ"/>
    <property type="match status" value="1"/>
</dbReference>
<dbReference type="InterPro" id="IPR003716">
    <property type="entry name" value="DNA-dir_RNA_pol_omega"/>
</dbReference>
<dbReference type="InterPro" id="IPR006110">
    <property type="entry name" value="Pol_omega/Rpo6/RPB6"/>
</dbReference>
<dbReference type="InterPro" id="IPR036161">
    <property type="entry name" value="RPB6/omega-like_sf"/>
</dbReference>
<dbReference type="NCBIfam" id="TIGR00690">
    <property type="entry name" value="rpoZ"/>
    <property type="match status" value="1"/>
</dbReference>
<dbReference type="PANTHER" id="PTHR34476">
    <property type="entry name" value="DNA-DIRECTED RNA POLYMERASE SUBUNIT OMEGA"/>
    <property type="match status" value="1"/>
</dbReference>
<dbReference type="PANTHER" id="PTHR34476:SF1">
    <property type="entry name" value="DNA-DIRECTED RNA POLYMERASE SUBUNIT OMEGA"/>
    <property type="match status" value="1"/>
</dbReference>
<dbReference type="Pfam" id="PF01192">
    <property type="entry name" value="RNA_pol_Rpb6"/>
    <property type="match status" value="1"/>
</dbReference>
<dbReference type="SMART" id="SM01409">
    <property type="entry name" value="RNA_pol_Rpb6"/>
    <property type="match status" value="1"/>
</dbReference>
<dbReference type="SUPFAM" id="SSF63562">
    <property type="entry name" value="RPB6/omega subunit-like"/>
    <property type="match status" value="1"/>
</dbReference>
<gene>
    <name evidence="1" type="primary">rpoZ</name>
    <name type="ordered locus">ECIAI39_4171</name>
</gene>
<proteinExistence type="inferred from homology"/>
<reference key="1">
    <citation type="journal article" date="2009" name="PLoS Genet.">
        <title>Organised genome dynamics in the Escherichia coli species results in highly diverse adaptive paths.</title>
        <authorList>
            <person name="Touchon M."/>
            <person name="Hoede C."/>
            <person name="Tenaillon O."/>
            <person name="Barbe V."/>
            <person name="Baeriswyl S."/>
            <person name="Bidet P."/>
            <person name="Bingen E."/>
            <person name="Bonacorsi S."/>
            <person name="Bouchier C."/>
            <person name="Bouvet O."/>
            <person name="Calteau A."/>
            <person name="Chiapello H."/>
            <person name="Clermont O."/>
            <person name="Cruveiller S."/>
            <person name="Danchin A."/>
            <person name="Diard M."/>
            <person name="Dossat C."/>
            <person name="Karoui M.E."/>
            <person name="Frapy E."/>
            <person name="Garry L."/>
            <person name="Ghigo J.M."/>
            <person name="Gilles A.M."/>
            <person name="Johnson J."/>
            <person name="Le Bouguenec C."/>
            <person name="Lescat M."/>
            <person name="Mangenot S."/>
            <person name="Martinez-Jehanne V."/>
            <person name="Matic I."/>
            <person name="Nassif X."/>
            <person name="Oztas S."/>
            <person name="Petit M.A."/>
            <person name="Pichon C."/>
            <person name="Rouy Z."/>
            <person name="Ruf C.S."/>
            <person name="Schneider D."/>
            <person name="Tourret J."/>
            <person name="Vacherie B."/>
            <person name="Vallenet D."/>
            <person name="Medigue C."/>
            <person name="Rocha E.P.C."/>
            <person name="Denamur E."/>
        </authorList>
    </citation>
    <scope>NUCLEOTIDE SEQUENCE [LARGE SCALE GENOMIC DNA]</scope>
    <source>
        <strain>IAI39 / ExPEC</strain>
    </source>
</reference>
<comment type="function">
    <text evidence="1">Promotes RNA polymerase assembly. Latches the N- and C-terminal regions of the beta' subunit thereby facilitating its interaction with the beta and alpha subunits.</text>
</comment>
<comment type="catalytic activity">
    <reaction evidence="1">
        <text>RNA(n) + a ribonucleoside 5'-triphosphate = RNA(n+1) + diphosphate</text>
        <dbReference type="Rhea" id="RHEA:21248"/>
        <dbReference type="Rhea" id="RHEA-COMP:14527"/>
        <dbReference type="Rhea" id="RHEA-COMP:17342"/>
        <dbReference type="ChEBI" id="CHEBI:33019"/>
        <dbReference type="ChEBI" id="CHEBI:61557"/>
        <dbReference type="ChEBI" id="CHEBI:140395"/>
        <dbReference type="EC" id="2.7.7.6"/>
    </reaction>
</comment>
<comment type="subunit">
    <text evidence="1">The RNAP catalytic core consists of 2 alpha, 1 beta, 1 beta' and 1 omega subunit. When a sigma factor is associated with the core the holoenzyme is formed, which can initiate transcription.</text>
</comment>
<comment type="similarity">
    <text evidence="1">Belongs to the RNA polymerase subunit omega family.</text>
</comment>
<protein>
    <recommendedName>
        <fullName evidence="1">DNA-directed RNA polymerase subunit omega</fullName>
        <shortName evidence="1">RNAP omega subunit</shortName>
        <ecNumber evidence="1">2.7.7.6</ecNumber>
    </recommendedName>
    <alternativeName>
        <fullName evidence="1">RNA polymerase omega subunit</fullName>
    </alternativeName>
    <alternativeName>
        <fullName evidence="1">Transcriptase subunit omega</fullName>
    </alternativeName>
</protein>
<organism>
    <name type="scientific">Escherichia coli O7:K1 (strain IAI39 / ExPEC)</name>
    <dbReference type="NCBI Taxonomy" id="585057"/>
    <lineage>
        <taxon>Bacteria</taxon>
        <taxon>Pseudomonadati</taxon>
        <taxon>Pseudomonadota</taxon>
        <taxon>Gammaproteobacteria</taxon>
        <taxon>Enterobacterales</taxon>
        <taxon>Enterobacteriaceae</taxon>
        <taxon>Escherichia</taxon>
    </lineage>
</organism>